<organism>
    <name type="scientific">Clostridium botulinum (strain Langeland / NCTC 10281 / Type F)</name>
    <dbReference type="NCBI Taxonomy" id="441772"/>
    <lineage>
        <taxon>Bacteria</taxon>
        <taxon>Bacillati</taxon>
        <taxon>Bacillota</taxon>
        <taxon>Clostridia</taxon>
        <taxon>Eubacteriales</taxon>
        <taxon>Clostridiaceae</taxon>
        <taxon>Clostridium</taxon>
    </lineage>
</organism>
<dbReference type="EC" id="4.2.1.10" evidence="1"/>
<dbReference type="EMBL" id="CP000728">
    <property type="protein sequence ID" value="ABS40209.1"/>
    <property type="molecule type" value="Genomic_DNA"/>
</dbReference>
<dbReference type="RefSeq" id="WP_012099925.1">
    <property type="nucleotide sequence ID" value="NC_009699.1"/>
</dbReference>
<dbReference type="SMR" id="A7GEL0"/>
<dbReference type="KEGG" id="cbf:CLI_1962"/>
<dbReference type="HOGENOM" id="CLU_090968_2_0_9"/>
<dbReference type="UniPathway" id="UPA00053">
    <property type="reaction ID" value="UER00086"/>
</dbReference>
<dbReference type="Proteomes" id="UP000002410">
    <property type="component" value="Chromosome"/>
</dbReference>
<dbReference type="GO" id="GO:0003855">
    <property type="term" value="F:3-dehydroquinate dehydratase activity"/>
    <property type="evidence" value="ECO:0007669"/>
    <property type="project" value="UniProtKB-UniRule"/>
</dbReference>
<dbReference type="GO" id="GO:0008652">
    <property type="term" value="P:amino acid biosynthetic process"/>
    <property type="evidence" value="ECO:0007669"/>
    <property type="project" value="UniProtKB-KW"/>
</dbReference>
<dbReference type="GO" id="GO:0009073">
    <property type="term" value="P:aromatic amino acid family biosynthetic process"/>
    <property type="evidence" value="ECO:0007669"/>
    <property type="project" value="UniProtKB-KW"/>
</dbReference>
<dbReference type="GO" id="GO:0009423">
    <property type="term" value="P:chorismate biosynthetic process"/>
    <property type="evidence" value="ECO:0007669"/>
    <property type="project" value="UniProtKB-UniRule"/>
</dbReference>
<dbReference type="GO" id="GO:0019631">
    <property type="term" value="P:quinate catabolic process"/>
    <property type="evidence" value="ECO:0007669"/>
    <property type="project" value="TreeGrafter"/>
</dbReference>
<dbReference type="CDD" id="cd00466">
    <property type="entry name" value="DHQase_II"/>
    <property type="match status" value="1"/>
</dbReference>
<dbReference type="Gene3D" id="3.40.50.9100">
    <property type="entry name" value="Dehydroquinase, class II"/>
    <property type="match status" value="1"/>
</dbReference>
<dbReference type="HAMAP" id="MF_00169">
    <property type="entry name" value="AroQ"/>
    <property type="match status" value="1"/>
</dbReference>
<dbReference type="InterPro" id="IPR001874">
    <property type="entry name" value="DHquinase_II"/>
</dbReference>
<dbReference type="InterPro" id="IPR018509">
    <property type="entry name" value="DHquinase_II_CS"/>
</dbReference>
<dbReference type="InterPro" id="IPR036441">
    <property type="entry name" value="DHquinase_II_sf"/>
</dbReference>
<dbReference type="NCBIfam" id="TIGR01088">
    <property type="entry name" value="aroQ"/>
    <property type="match status" value="1"/>
</dbReference>
<dbReference type="NCBIfam" id="NF003805">
    <property type="entry name" value="PRK05395.1-2"/>
    <property type="match status" value="1"/>
</dbReference>
<dbReference type="NCBIfam" id="NF003806">
    <property type="entry name" value="PRK05395.1-3"/>
    <property type="match status" value="1"/>
</dbReference>
<dbReference type="NCBIfam" id="NF003807">
    <property type="entry name" value="PRK05395.1-4"/>
    <property type="match status" value="1"/>
</dbReference>
<dbReference type="PANTHER" id="PTHR21272">
    <property type="entry name" value="CATABOLIC 3-DEHYDROQUINASE"/>
    <property type="match status" value="1"/>
</dbReference>
<dbReference type="PANTHER" id="PTHR21272:SF3">
    <property type="entry name" value="CATABOLIC 3-DEHYDROQUINASE"/>
    <property type="match status" value="1"/>
</dbReference>
<dbReference type="Pfam" id="PF01220">
    <property type="entry name" value="DHquinase_II"/>
    <property type="match status" value="1"/>
</dbReference>
<dbReference type="PIRSF" id="PIRSF001399">
    <property type="entry name" value="DHquinase_II"/>
    <property type="match status" value="1"/>
</dbReference>
<dbReference type="SUPFAM" id="SSF52304">
    <property type="entry name" value="Type II 3-dehydroquinate dehydratase"/>
    <property type="match status" value="1"/>
</dbReference>
<dbReference type="PROSITE" id="PS01029">
    <property type="entry name" value="DEHYDROQUINASE_II"/>
    <property type="match status" value="1"/>
</dbReference>
<evidence type="ECO:0000255" key="1">
    <source>
        <dbReference type="HAMAP-Rule" id="MF_00169"/>
    </source>
</evidence>
<proteinExistence type="inferred from homology"/>
<keyword id="KW-0028">Amino-acid biosynthesis</keyword>
<keyword id="KW-0057">Aromatic amino acid biosynthesis</keyword>
<keyword id="KW-0456">Lyase</keyword>
<sequence length="152" mass="17399">MNNILVINGPNLNLLGKREPDIYGNITLENINQKIKLHFKNEDLKIDFFQSNEEGKIIDKIIESEKKYNAIVINPAAYSHYSIAILDAMRSINIPVVEVHLSNIYKREEYRKKSVTAEASLGVISGFGYYGYIMAIEFILNNLVRENNIVVH</sequence>
<feature type="chain" id="PRO_1000203671" description="3-dehydroquinate dehydratase">
    <location>
        <begin position="1"/>
        <end position="152"/>
    </location>
</feature>
<feature type="active site" description="Proton acceptor" evidence="1">
    <location>
        <position position="23"/>
    </location>
</feature>
<feature type="active site" description="Proton donor" evidence="1">
    <location>
        <position position="100"/>
    </location>
</feature>
<feature type="binding site" evidence="1">
    <location>
        <position position="74"/>
    </location>
    <ligand>
        <name>substrate</name>
    </ligand>
</feature>
<feature type="binding site" evidence="1">
    <location>
        <position position="80"/>
    </location>
    <ligand>
        <name>substrate</name>
    </ligand>
</feature>
<feature type="binding site" evidence="1">
    <location>
        <position position="87"/>
    </location>
    <ligand>
        <name>substrate</name>
    </ligand>
</feature>
<feature type="binding site" evidence="1">
    <location>
        <begin position="101"/>
        <end position="102"/>
    </location>
    <ligand>
        <name>substrate</name>
    </ligand>
</feature>
<feature type="binding site" evidence="1">
    <location>
        <position position="111"/>
    </location>
    <ligand>
        <name>substrate</name>
    </ligand>
</feature>
<feature type="site" description="Transition state stabilizer" evidence="1">
    <location>
        <position position="18"/>
    </location>
</feature>
<accession>A7GEL0</accession>
<comment type="function">
    <text evidence="1">Catalyzes a trans-dehydration via an enolate intermediate.</text>
</comment>
<comment type="catalytic activity">
    <reaction evidence="1">
        <text>3-dehydroquinate = 3-dehydroshikimate + H2O</text>
        <dbReference type="Rhea" id="RHEA:21096"/>
        <dbReference type="ChEBI" id="CHEBI:15377"/>
        <dbReference type="ChEBI" id="CHEBI:16630"/>
        <dbReference type="ChEBI" id="CHEBI:32364"/>
        <dbReference type="EC" id="4.2.1.10"/>
    </reaction>
</comment>
<comment type="pathway">
    <text evidence="1">Metabolic intermediate biosynthesis; chorismate biosynthesis; chorismate from D-erythrose 4-phosphate and phosphoenolpyruvate: step 3/7.</text>
</comment>
<comment type="subunit">
    <text evidence="1">Homododecamer.</text>
</comment>
<comment type="similarity">
    <text evidence="1">Belongs to the type-II 3-dehydroquinase family.</text>
</comment>
<name>AROQ_CLOBL</name>
<gene>
    <name evidence="1" type="primary">aroQ</name>
    <name type="ordered locus">CLI_1962</name>
</gene>
<reference key="1">
    <citation type="submission" date="2007-06" db="EMBL/GenBank/DDBJ databases">
        <authorList>
            <person name="Brinkac L.M."/>
            <person name="Daugherty S."/>
            <person name="Dodson R.J."/>
            <person name="Madupu R."/>
            <person name="Brown J.L."/>
            <person name="Bruce D."/>
            <person name="Detter C."/>
            <person name="Munk C."/>
            <person name="Smith L.A."/>
            <person name="Smith T.J."/>
            <person name="White O."/>
            <person name="Brettin T.S."/>
        </authorList>
    </citation>
    <scope>NUCLEOTIDE SEQUENCE [LARGE SCALE GENOMIC DNA]</scope>
    <source>
        <strain>Langeland / NCTC 10281 / Type F</strain>
    </source>
</reference>
<protein>
    <recommendedName>
        <fullName evidence="1">3-dehydroquinate dehydratase</fullName>
        <shortName evidence="1">3-dehydroquinase</shortName>
        <ecNumber evidence="1">4.2.1.10</ecNumber>
    </recommendedName>
    <alternativeName>
        <fullName evidence="1">Type II DHQase</fullName>
    </alternativeName>
</protein>